<accession>P31484</accession>
<evidence type="ECO:0000255" key="1">
    <source>
        <dbReference type="PROSITE-ProRule" id="PRU00303"/>
    </source>
</evidence>
<evidence type="ECO:0000305" key="2"/>
<feature type="signal peptide" evidence="1">
    <location>
        <begin position="1"/>
        <end position="17"/>
    </location>
</feature>
<feature type="chain" id="PRO_0000018160" description="Outer membrane lipoprotein pcp">
    <location>
        <begin position="18"/>
        <end position="155"/>
    </location>
</feature>
<feature type="lipid moiety-binding region" description="N-palmitoyl cysteine" evidence="1">
    <location>
        <position position="18"/>
    </location>
</feature>
<feature type="lipid moiety-binding region" description="S-diacylglycerol cysteine" evidence="1">
    <location>
        <position position="18"/>
    </location>
</feature>
<comment type="function">
    <text>Facilitates ferrioxamine uptake.</text>
</comment>
<comment type="subcellular location">
    <subcellularLocation>
        <location>Cell outer membrane</location>
        <topology>Lipid-anchor</topology>
    </subcellularLocation>
</comment>
<comment type="similarity">
    <text evidence="2">Belongs to the Pcp/SlyB lipoprotein family.</text>
</comment>
<dbReference type="EMBL" id="X60448">
    <property type="protein sequence ID" value="CAA42977.1"/>
    <property type="molecule type" value="Genomic_DNA"/>
</dbReference>
<dbReference type="PIR" id="S23787">
    <property type="entry name" value="S23787"/>
</dbReference>
<dbReference type="RefSeq" id="WP_005165921.1">
    <property type="nucleotide sequence ID" value="NZ_WJHZ01000013.1"/>
</dbReference>
<dbReference type="SMR" id="P31484"/>
<dbReference type="STRING" id="1443113.LC20_02897"/>
<dbReference type="eggNOG" id="COG3133">
    <property type="taxonomic scope" value="Bacteria"/>
</dbReference>
<dbReference type="OMA" id="IVVVQKY"/>
<dbReference type="GO" id="GO:0009279">
    <property type="term" value="C:cell outer membrane"/>
    <property type="evidence" value="ECO:0007669"/>
    <property type="project" value="UniProtKB-SubCell"/>
</dbReference>
<dbReference type="InterPro" id="IPR051407">
    <property type="entry name" value="Bact_OM_lipoprot/Surf_antigen"/>
</dbReference>
<dbReference type="InterPro" id="IPR008816">
    <property type="entry name" value="Gly_zipper_2TM_dom"/>
</dbReference>
<dbReference type="PANTHER" id="PTHR35603">
    <property type="match status" value="1"/>
</dbReference>
<dbReference type="PANTHER" id="PTHR35603:SF1">
    <property type="entry name" value="OUTER MEMBRANE LIPOPROTEIN SLYB"/>
    <property type="match status" value="1"/>
</dbReference>
<dbReference type="Pfam" id="PF05433">
    <property type="entry name" value="Rick_17kDa_Anti"/>
    <property type="match status" value="1"/>
</dbReference>
<dbReference type="PROSITE" id="PS51257">
    <property type="entry name" value="PROKAR_LIPOPROTEIN"/>
    <property type="match status" value="1"/>
</dbReference>
<protein>
    <recommendedName>
        <fullName>Outer membrane lipoprotein pcp</fullName>
    </recommendedName>
</protein>
<name>PCP_YEREN</name>
<reference key="1">
    <citation type="journal article" date="1992" name="J. Bacteriol.">
        <title>A lipoprotein of Yersinia enterocolitica facilitates ferrioxamine uptake in Escherichia coli.</title>
        <authorList>
            <person name="Baeumler A.J."/>
            <person name="Hantke K."/>
        </authorList>
    </citation>
    <scope>NUCLEOTIDE SEQUENCE [GENOMIC DNA]</scope>
    <source>
        <strain>ATCC 51872 / WA-C / Serotype O:8</strain>
    </source>
</reference>
<gene>
    <name type="primary">pcp</name>
    <name type="synonym">pcpY</name>
</gene>
<keyword id="KW-0998">Cell outer membrane</keyword>
<keyword id="KW-0449">Lipoprotein</keyword>
<keyword id="KW-0472">Membrane</keyword>
<keyword id="KW-0564">Palmitate</keyword>
<keyword id="KW-0732">Signal</keyword>
<organism>
    <name type="scientific">Yersinia enterocolitica</name>
    <dbReference type="NCBI Taxonomy" id="630"/>
    <lineage>
        <taxon>Bacteria</taxon>
        <taxon>Pseudomonadati</taxon>
        <taxon>Pseudomonadota</taxon>
        <taxon>Gammaproteobacteria</taxon>
        <taxon>Enterobacterales</taxon>
        <taxon>Yersiniaceae</taxon>
        <taxon>Yersinia</taxon>
    </lineage>
</organism>
<sequence length="155" mass="15362">MIKPLIAVAIAAVTLTGCANNNTLSGDVFSASQAKQVQTVTYGTLLSVRPVTIQGGDDNNVMGAIGGAVLGGFLGNTVGGGTGRSLATAAGAVAGGMAGQGVQGAMNRTDGVQLEVRKDDGTTILVVQKQGPTRFSVGQRVMLASSGSTVTVSPR</sequence>
<proteinExistence type="inferred from homology"/>